<name>PRMA_CAMHC</name>
<organism>
    <name type="scientific">Campylobacter hominis (strain ATCC BAA-381 / DSM 21671 / CCUG 45161 / LMG 19568 / NCTC 13146 / CH001A)</name>
    <dbReference type="NCBI Taxonomy" id="360107"/>
    <lineage>
        <taxon>Bacteria</taxon>
        <taxon>Pseudomonadati</taxon>
        <taxon>Campylobacterota</taxon>
        <taxon>Epsilonproteobacteria</taxon>
        <taxon>Campylobacterales</taxon>
        <taxon>Campylobacteraceae</taxon>
        <taxon>Campylobacter</taxon>
    </lineage>
</organism>
<sequence>MKKNYYEMEVSSKNASELFKNFSFELGVEAIEEKENSFIIRDEEDLQNLEFAFIEFQKALQKKFNTKIDLQISKSIKENADWIEKYQKSVEPIEVGKFYVRPSWKESKKELIDIIIDPAIAFGSGHHESTNMCLKLIDKYAKDGATALDVGCGSGILSIALKKIGLKVAACDTDIQAVDASIKNAQKNGVKIDKIWNGSIADANLAIRNMDGEILSENLNENKNFNQSFNKEFDFVIANIITDVILILQNELKNSVKSGGILIISGILEKYKNKILNVFSDMNNLEILQNGEWVSFVFKKG</sequence>
<dbReference type="EC" id="2.1.1.-" evidence="1"/>
<dbReference type="EMBL" id="CP000776">
    <property type="protein sequence ID" value="ABS51753.1"/>
    <property type="molecule type" value="Genomic_DNA"/>
</dbReference>
<dbReference type="RefSeq" id="WP_012108361.1">
    <property type="nucleotide sequence ID" value="NC_009714.1"/>
</dbReference>
<dbReference type="SMR" id="A7I0N5"/>
<dbReference type="STRING" id="360107.CHAB381_0488"/>
<dbReference type="KEGG" id="cha:CHAB381_0488"/>
<dbReference type="eggNOG" id="COG2264">
    <property type="taxonomic scope" value="Bacteria"/>
</dbReference>
<dbReference type="HOGENOM" id="CLU_049382_1_0_7"/>
<dbReference type="OrthoDB" id="9785995at2"/>
<dbReference type="Proteomes" id="UP000002407">
    <property type="component" value="Chromosome"/>
</dbReference>
<dbReference type="GO" id="GO:0005737">
    <property type="term" value="C:cytoplasm"/>
    <property type="evidence" value="ECO:0007669"/>
    <property type="project" value="UniProtKB-SubCell"/>
</dbReference>
<dbReference type="GO" id="GO:0016279">
    <property type="term" value="F:protein-lysine N-methyltransferase activity"/>
    <property type="evidence" value="ECO:0007669"/>
    <property type="project" value="RHEA"/>
</dbReference>
<dbReference type="GO" id="GO:0032259">
    <property type="term" value="P:methylation"/>
    <property type="evidence" value="ECO:0007669"/>
    <property type="project" value="UniProtKB-KW"/>
</dbReference>
<dbReference type="CDD" id="cd02440">
    <property type="entry name" value="AdoMet_MTases"/>
    <property type="match status" value="1"/>
</dbReference>
<dbReference type="Gene3D" id="3.40.50.150">
    <property type="entry name" value="Vaccinia Virus protein VP39"/>
    <property type="match status" value="1"/>
</dbReference>
<dbReference type="HAMAP" id="MF_00735">
    <property type="entry name" value="Methyltr_PrmA"/>
    <property type="match status" value="1"/>
</dbReference>
<dbReference type="InterPro" id="IPR050078">
    <property type="entry name" value="Ribosomal_L11_MeTrfase_PrmA"/>
</dbReference>
<dbReference type="InterPro" id="IPR004498">
    <property type="entry name" value="Ribosomal_PrmA_MeTrfase"/>
</dbReference>
<dbReference type="InterPro" id="IPR029063">
    <property type="entry name" value="SAM-dependent_MTases_sf"/>
</dbReference>
<dbReference type="NCBIfam" id="NF001786">
    <property type="entry name" value="PRK00517.2-4"/>
    <property type="match status" value="1"/>
</dbReference>
<dbReference type="PANTHER" id="PTHR43648">
    <property type="entry name" value="ELECTRON TRANSFER FLAVOPROTEIN BETA SUBUNIT LYSINE METHYLTRANSFERASE"/>
    <property type="match status" value="1"/>
</dbReference>
<dbReference type="PANTHER" id="PTHR43648:SF1">
    <property type="entry name" value="ELECTRON TRANSFER FLAVOPROTEIN BETA SUBUNIT LYSINE METHYLTRANSFERASE"/>
    <property type="match status" value="1"/>
</dbReference>
<dbReference type="Pfam" id="PF06325">
    <property type="entry name" value="PrmA"/>
    <property type="match status" value="1"/>
</dbReference>
<dbReference type="PIRSF" id="PIRSF000401">
    <property type="entry name" value="RPL11_MTase"/>
    <property type="match status" value="1"/>
</dbReference>
<dbReference type="SUPFAM" id="SSF53335">
    <property type="entry name" value="S-adenosyl-L-methionine-dependent methyltransferases"/>
    <property type="match status" value="1"/>
</dbReference>
<feature type="chain" id="PRO_1000046003" description="Ribosomal protein L11 methyltransferase">
    <location>
        <begin position="1"/>
        <end position="301"/>
    </location>
</feature>
<feature type="binding site" evidence="1">
    <location>
        <position position="130"/>
    </location>
    <ligand>
        <name>S-adenosyl-L-methionine</name>
        <dbReference type="ChEBI" id="CHEBI:59789"/>
    </ligand>
</feature>
<feature type="binding site" evidence="1">
    <location>
        <position position="151"/>
    </location>
    <ligand>
        <name>S-adenosyl-L-methionine</name>
        <dbReference type="ChEBI" id="CHEBI:59789"/>
    </ligand>
</feature>
<feature type="binding site" evidence="1">
    <location>
        <position position="172"/>
    </location>
    <ligand>
        <name>S-adenosyl-L-methionine</name>
        <dbReference type="ChEBI" id="CHEBI:59789"/>
    </ligand>
</feature>
<feature type="binding site" evidence="1">
    <location>
        <position position="239"/>
    </location>
    <ligand>
        <name>S-adenosyl-L-methionine</name>
        <dbReference type="ChEBI" id="CHEBI:59789"/>
    </ligand>
</feature>
<protein>
    <recommendedName>
        <fullName evidence="1">Ribosomal protein L11 methyltransferase</fullName>
        <shortName evidence="1">L11 Mtase</shortName>
        <ecNumber evidence="1">2.1.1.-</ecNumber>
    </recommendedName>
</protein>
<gene>
    <name evidence="1" type="primary">prmA</name>
    <name type="ordered locus">CHAB381_0488</name>
</gene>
<evidence type="ECO:0000255" key="1">
    <source>
        <dbReference type="HAMAP-Rule" id="MF_00735"/>
    </source>
</evidence>
<accession>A7I0N5</accession>
<proteinExistence type="inferred from homology"/>
<comment type="function">
    <text evidence="1">Methylates ribosomal protein L11.</text>
</comment>
<comment type="catalytic activity">
    <reaction evidence="1">
        <text>L-lysyl-[protein] + 3 S-adenosyl-L-methionine = N(6),N(6),N(6)-trimethyl-L-lysyl-[protein] + 3 S-adenosyl-L-homocysteine + 3 H(+)</text>
        <dbReference type="Rhea" id="RHEA:54192"/>
        <dbReference type="Rhea" id="RHEA-COMP:9752"/>
        <dbReference type="Rhea" id="RHEA-COMP:13826"/>
        <dbReference type="ChEBI" id="CHEBI:15378"/>
        <dbReference type="ChEBI" id="CHEBI:29969"/>
        <dbReference type="ChEBI" id="CHEBI:57856"/>
        <dbReference type="ChEBI" id="CHEBI:59789"/>
        <dbReference type="ChEBI" id="CHEBI:61961"/>
    </reaction>
</comment>
<comment type="subcellular location">
    <subcellularLocation>
        <location evidence="1">Cytoplasm</location>
    </subcellularLocation>
</comment>
<comment type="similarity">
    <text evidence="1">Belongs to the methyltransferase superfamily. PrmA family.</text>
</comment>
<keyword id="KW-0963">Cytoplasm</keyword>
<keyword id="KW-0489">Methyltransferase</keyword>
<keyword id="KW-1185">Reference proteome</keyword>
<keyword id="KW-0949">S-adenosyl-L-methionine</keyword>
<keyword id="KW-0808">Transferase</keyword>
<reference key="1">
    <citation type="submission" date="2007-07" db="EMBL/GenBank/DDBJ databases">
        <title>Complete genome sequence of Campylobacter hominis ATCC BAA-381, a commensal isolated from the human gastrointestinal tract.</title>
        <authorList>
            <person name="Fouts D.E."/>
            <person name="Mongodin E.F."/>
            <person name="Puiu D."/>
            <person name="Sebastian Y."/>
            <person name="Miller W.G."/>
            <person name="Mandrell R.E."/>
            <person name="Nelson K.E."/>
        </authorList>
    </citation>
    <scope>NUCLEOTIDE SEQUENCE [LARGE SCALE GENOMIC DNA]</scope>
    <source>
        <strain>ATCC BAA-381 / DSM 21671 / CCUG 45161 / LMG 19568 / NCTC 13146 / CH001A</strain>
    </source>
</reference>